<gene>
    <name evidence="1" type="primary">rpsM</name>
    <name type="ordered locus">Swol_2307</name>
</gene>
<organism>
    <name type="scientific">Syntrophomonas wolfei subsp. wolfei (strain DSM 2245B / Goettingen)</name>
    <dbReference type="NCBI Taxonomy" id="335541"/>
    <lineage>
        <taxon>Bacteria</taxon>
        <taxon>Bacillati</taxon>
        <taxon>Bacillota</taxon>
        <taxon>Clostridia</taxon>
        <taxon>Eubacteriales</taxon>
        <taxon>Syntrophomonadaceae</taxon>
        <taxon>Syntrophomonas</taxon>
    </lineage>
</organism>
<evidence type="ECO:0000255" key="1">
    <source>
        <dbReference type="HAMAP-Rule" id="MF_01315"/>
    </source>
</evidence>
<evidence type="ECO:0000256" key="2">
    <source>
        <dbReference type="SAM" id="MobiDB-lite"/>
    </source>
</evidence>
<evidence type="ECO:0000305" key="3"/>
<dbReference type="EMBL" id="CP000448">
    <property type="protein sequence ID" value="ABI69598.1"/>
    <property type="molecule type" value="Genomic_DNA"/>
</dbReference>
<dbReference type="RefSeq" id="WP_011641682.1">
    <property type="nucleotide sequence ID" value="NC_008346.1"/>
</dbReference>
<dbReference type="SMR" id="Q0AUK6"/>
<dbReference type="STRING" id="335541.Swol_2307"/>
<dbReference type="KEGG" id="swo:Swol_2307"/>
<dbReference type="eggNOG" id="COG0099">
    <property type="taxonomic scope" value="Bacteria"/>
</dbReference>
<dbReference type="HOGENOM" id="CLU_103849_1_2_9"/>
<dbReference type="OrthoDB" id="9803610at2"/>
<dbReference type="Proteomes" id="UP000001968">
    <property type="component" value="Chromosome"/>
</dbReference>
<dbReference type="GO" id="GO:0005829">
    <property type="term" value="C:cytosol"/>
    <property type="evidence" value="ECO:0007669"/>
    <property type="project" value="TreeGrafter"/>
</dbReference>
<dbReference type="GO" id="GO:0015935">
    <property type="term" value="C:small ribosomal subunit"/>
    <property type="evidence" value="ECO:0007669"/>
    <property type="project" value="TreeGrafter"/>
</dbReference>
<dbReference type="GO" id="GO:0019843">
    <property type="term" value="F:rRNA binding"/>
    <property type="evidence" value="ECO:0007669"/>
    <property type="project" value="UniProtKB-UniRule"/>
</dbReference>
<dbReference type="GO" id="GO:0003735">
    <property type="term" value="F:structural constituent of ribosome"/>
    <property type="evidence" value="ECO:0007669"/>
    <property type="project" value="InterPro"/>
</dbReference>
<dbReference type="GO" id="GO:0000049">
    <property type="term" value="F:tRNA binding"/>
    <property type="evidence" value="ECO:0007669"/>
    <property type="project" value="UniProtKB-UniRule"/>
</dbReference>
<dbReference type="GO" id="GO:0006412">
    <property type="term" value="P:translation"/>
    <property type="evidence" value="ECO:0007669"/>
    <property type="project" value="UniProtKB-UniRule"/>
</dbReference>
<dbReference type="FunFam" id="1.10.8.50:FF:000001">
    <property type="entry name" value="30S ribosomal protein S13"/>
    <property type="match status" value="1"/>
</dbReference>
<dbReference type="FunFam" id="4.10.910.10:FF:000001">
    <property type="entry name" value="30S ribosomal protein S13"/>
    <property type="match status" value="1"/>
</dbReference>
<dbReference type="Gene3D" id="1.10.8.50">
    <property type="match status" value="1"/>
</dbReference>
<dbReference type="Gene3D" id="4.10.910.10">
    <property type="entry name" value="30s ribosomal protein s13, domain 2"/>
    <property type="match status" value="1"/>
</dbReference>
<dbReference type="HAMAP" id="MF_01315">
    <property type="entry name" value="Ribosomal_uS13"/>
    <property type="match status" value="1"/>
</dbReference>
<dbReference type="InterPro" id="IPR027437">
    <property type="entry name" value="Rbsml_uS13_C"/>
</dbReference>
<dbReference type="InterPro" id="IPR001892">
    <property type="entry name" value="Ribosomal_uS13"/>
</dbReference>
<dbReference type="InterPro" id="IPR010979">
    <property type="entry name" value="Ribosomal_uS13-like_H2TH"/>
</dbReference>
<dbReference type="InterPro" id="IPR019980">
    <property type="entry name" value="Ribosomal_uS13_bac-type"/>
</dbReference>
<dbReference type="InterPro" id="IPR018269">
    <property type="entry name" value="Ribosomal_uS13_CS"/>
</dbReference>
<dbReference type="NCBIfam" id="TIGR03631">
    <property type="entry name" value="uS13_bact"/>
    <property type="match status" value="1"/>
</dbReference>
<dbReference type="PANTHER" id="PTHR10871">
    <property type="entry name" value="30S RIBOSOMAL PROTEIN S13/40S RIBOSOMAL PROTEIN S18"/>
    <property type="match status" value="1"/>
</dbReference>
<dbReference type="PANTHER" id="PTHR10871:SF1">
    <property type="entry name" value="SMALL RIBOSOMAL SUBUNIT PROTEIN US13M"/>
    <property type="match status" value="1"/>
</dbReference>
<dbReference type="Pfam" id="PF00416">
    <property type="entry name" value="Ribosomal_S13"/>
    <property type="match status" value="1"/>
</dbReference>
<dbReference type="PIRSF" id="PIRSF002134">
    <property type="entry name" value="Ribosomal_S13"/>
    <property type="match status" value="1"/>
</dbReference>
<dbReference type="SUPFAM" id="SSF46946">
    <property type="entry name" value="S13-like H2TH domain"/>
    <property type="match status" value="1"/>
</dbReference>
<dbReference type="PROSITE" id="PS00646">
    <property type="entry name" value="RIBOSOMAL_S13_1"/>
    <property type="match status" value="1"/>
</dbReference>
<dbReference type="PROSITE" id="PS50159">
    <property type="entry name" value="RIBOSOMAL_S13_2"/>
    <property type="match status" value="1"/>
</dbReference>
<sequence length="122" mass="13958">MARIAGVDLPRDKRIEVSLTYIFGIGRSSSRKILTDAGINPDTRVKDLTEEEVSKLREIIEKEYHVEGDLRRQVNMDIKRLMDLGCYRGIRHRRGLPVRGQNTKTNARTRKGPKRTAGGKKK</sequence>
<protein>
    <recommendedName>
        <fullName evidence="1">Small ribosomal subunit protein uS13</fullName>
    </recommendedName>
    <alternativeName>
        <fullName evidence="3">30S ribosomal protein S13</fullName>
    </alternativeName>
</protein>
<accession>Q0AUK6</accession>
<feature type="chain" id="PRO_0000306737" description="Small ribosomal subunit protein uS13">
    <location>
        <begin position="1"/>
        <end position="122"/>
    </location>
</feature>
<feature type="region of interest" description="Disordered" evidence="2">
    <location>
        <begin position="93"/>
        <end position="122"/>
    </location>
</feature>
<feature type="compositionally biased region" description="Basic residues" evidence="2">
    <location>
        <begin position="107"/>
        <end position="122"/>
    </location>
</feature>
<name>RS13_SYNWW</name>
<keyword id="KW-1185">Reference proteome</keyword>
<keyword id="KW-0687">Ribonucleoprotein</keyword>
<keyword id="KW-0689">Ribosomal protein</keyword>
<keyword id="KW-0694">RNA-binding</keyword>
<keyword id="KW-0699">rRNA-binding</keyword>
<keyword id="KW-0820">tRNA-binding</keyword>
<proteinExistence type="inferred from homology"/>
<reference key="1">
    <citation type="journal article" date="2010" name="Environ. Microbiol.">
        <title>The genome of Syntrophomonas wolfei: new insights into syntrophic metabolism and biohydrogen production.</title>
        <authorList>
            <person name="Sieber J.R."/>
            <person name="Sims D.R."/>
            <person name="Han C."/>
            <person name="Kim E."/>
            <person name="Lykidis A."/>
            <person name="Lapidus A.L."/>
            <person name="McDonnald E."/>
            <person name="Rohlin L."/>
            <person name="Culley D.E."/>
            <person name="Gunsalus R."/>
            <person name="McInerney M.J."/>
        </authorList>
    </citation>
    <scope>NUCLEOTIDE SEQUENCE [LARGE SCALE GENOMIC DNA]</scope>
    <source>
        <strain>DSM 2245B / Goettingen</strain>
    </source>
</reference>
<comment type="function">
    <text evidence="1">Located at the top of the head of the 30S subunit, it contacts several helices of the 16S rRNA. In the 70S ribosome it contacts the 23S rRNA (bridge B1a) and protein L5 of the 50S subunit (bridge B1b), connecting the 2 subunits; these bridges are implicated in subunit movement. Contacts the tRNAs in the A and P-sites.</text>
</comment>
<comment type="subunit">
    <text evidence="1">Part of the 30S ribosomal subunit. Forms a loose heterodimer with protein S19. Forms two bridges to the 50S subunit in the 70S ribosome.</text>
</comment>
<comment type="similarity">
    <text evidence="1">Belongs to the universal ribosomal protein uS13 family.</text>
</comment>